<keyword id="KW-0238">DNA-binding</keyword>
<keyword id="KW-0244">Early protein</keyword>
<keyword id="KW-1048">Host nucleus</keyword>
<keyword id="KW-0597">Phosphoprotein</keyword>
<keyword id="KW-0804">Transcription</keyword>
<keyword id="KW-0805">Transcription regulation</keyword>
<gene>
    <name type="primary">IE</name>
    <name type="ordered locus">64</name>
</gene>
<evidence type="ECO:0000250" key="1"/>
<evidence type="ECO:0000256" key="2">
    <source>
        <dbReference type="SAM" id="MobiDB-lite"/>
    </source>
</evidence>
<evidence type="ECO:0000305" key="3"/>
<evidence type="ECO:0000312" key="4">
    <source>
        <dbReference type="EMBL" id="AAS45948.1"/>
    </source>
</evidence>
<accession>Q6S6U0</accession>
<comment type="function">
    <text evidence="1">This IE protein is a multifunctional protein capable of migrating to the nucleus, binding to DNA, trans-activating other viral genes, and autoregulating its own synthesis.</text>
</comment>
<comment type="subcellular location">
    <subcellularLocation>
        <location evidence="1">Host nucleus</location>
    </subcellularLocation>
</comment>
<comment type="PTM">
    <text evidence="1">A long stretch of serine residues may be a major site of phosphorylation.</text>
</comment>
<comment type="similarity">
    <text evidence="3">Belongs to the herpesviridae ICP4 family.</text>
</comment>
<name>ICP4_EHV1V</name>
<dbReference type="EMBL" id="AY464052">
    <property type="protein sequence ID" value="AAS45948.1"/>
    <property type="molecule type" value="Genomic_DNA"/>
</dbReference>
<dbReference type="EMBL" id="AY464052">
    <property type="protein sequence ID" value="AAS45949.1"/>
    <property type="molecule type" value="Genomic_DNA"/>
</dbReference>
<dbReference type="SMR" id="Q6S6U0"/>
<dbReference type="Proteomes" id="UP000008296">
    <property type="component" value="Segment"/>
</dbReference>
<dbReference type="GO" id="GO:0042025">
    <property type="term" value="C:host cell nucleus"/>
    <property type="evidence" value="ECO:0007669"/>
    <property type="project" value="UniProtKB-SubCell"/>
</dbReference>
<dbReference type="GO" id="GO:0003677">
    <property type="term" value="F:DNA binding"/>
    <property type="evidence" value="ECO:0007669"/>
    <property type="project" value="UniProtKB-KW"/>
</dbReference>
<dbReference type="GO" id="GO:0039695">
    <property type="term" value="P:DNA-templated viral transcription"/>
    <property type="evidence" value="ECO:0000250"/>
    <property type="project" value="UniProtKB"/>
</dbReference>
<dbReference type="GO" id="GO:0045893">
    <property type="term" value="P:positive regulation of DNA-templated transcription"/>
    <property type="evidence" value="ECO:0007669"/>
    <property type="project" value="InterPro"/>
</dbReference>
<dbReference type="InterPro" id="IPR005205">
    <property type="entry name" value="Herpes_ICP4_C"/>
</dbReference>
<dbReference type="InterPro" id="IPR005206">
    <property type="entry name" value="Herpes_ICP4_N"/>
</dbReference>
<dbReference type="PANTHER" id="PTHR48125">
    <property type="entry name" value="LP07818P1"/>
    <property type="match status" value="1"/>
</dbReference>
<dbReference type="PANTHER" id="PTHR48125:SF10">
    <property type="entry name" value="OS12G0136300 PROTEIN"/>
    <property type="match status" value="1"/>
</dbReference>
<dbReference type="Pfam" id="PF03585">
    <property type="entry name" value="Herpes_ICP4_C"/>
    <property type="match status" value="1"/>
</dbReference>
<dbReference type="Pfam" id="PF03584">
    <property type="entry name" value="Herpes_ICP4_N"/>
    <property type="match status" value="1"/>
</dbReference>
<feature type="chain" id="PRO_0000115818" description="Major viral transcription factor ICP4 homolog">
    <location>
        <begin position="1"/>
        <end position="1487"/>
    </location>
</feature>
<feature type="region of interest" description="Disordered" evidence="2">
    <location>
        <begin position="41"/>
        <end position="295"/>
    </location>
</feature>
<feature type="region of interest" description="Disordered" evidence="2">
    <location>
        <begin position="310"/>
        <end position="370"/>
    </location>
</feature>
<feature type="region of interest" description="Disordered" evidence="2">
    <location>
        <begin position="803"/>
        <end position="1007"/>
    </location>
</feature>
<feature type="compositionally biased region" description="Pro residues" evidence="2">
    <location>
        <begin position="66"/>
        <end position="75"/>
    </location>
</feature>
<feature type="compositionally biased region" description="Low complexity" evidence="2">
    <location>
        <begin position="165"/>
        <end position="193"/>
    </location>
</feature>
<feature type="compositionally biased region" description="Low complexity" evidence="2">
    <location>
        <begin position="201"/>
        <end position="213"/>
    </location>
</feature>
<feature type="compositionally biased region" description="Acidic residues" evidence="2">
    <location>
        <begin position="214"/>
        <end position="224"/>
    </location>
</feature>
<feature type="compositionally biased region" description="Low complexity" evidence="2">
    <location>
        <begin position="235"/>
        <end position="272"/>
    </location>
</feature>
<feature type="compositionally biased region" description="Pro residues" evidence="2">
    <location>
        <begin position="273"/>
        <end position="285"/>
    </location>
</feature>
<feature type="compositionally biased region" description="Low complexity" evidence="2">
    <location>
        <begin position="807"/>
        <end position="829"/>
    </location>
</feature>
<feature type="compositionally biased region" description="Low complexity" evidence="2">
    <location>
        <begin position="849"/>
        <end position="860"/>
    </location>
</feature>
<feature type="compositionally biased region" description="Low complexity" evidence="2">
    <location>
        <begin position="867"/>
        <end position="877"/>
    </location>
</feature>
<feature type="compositionally biased region" description="Polar residues" evidence="2">
    <location>
        <begin position="878"/>
        <end position="893"/>
    </location>
</feature>
<feature type="compositionally biased region" description="Basic residues" evidence="2">
    <location>
        <begin position="920"/>
        <end position="929"/>
    </location>
</feature>
<feature type="compositionally biased region" description="Low complexity" evidence="2">
    <location>
        <begin position="938"/>
        <end position="951"/>
    </location>
</feature>
<feature type="compositionally biased region" description="Basic and acidic residues" evidence="2">
    <location>
        <begin position="988"/>
        <end position="1007"/>
    </location>
</feature>
<protein>
    <recommendedName>
        <fullName>Major viral transcription factor ICP4 homolog</fullName>
    </recommendedName>
    <alternativeName>
        <fullName>155 kDa immediate-early protein</fullName>
    </alternativeName>
</protein>
<reference evidence="3 4" key="1">
    <citation type="submission" date="2003-11" db="EMBL/GenBank/DDBJ databases">
        <authorList>
            <person name="Davis-Poynter N."/>
            <person name="Nugent J."/>
            <person name="Birch-Machin I."/>
            <person name="Allen G.P."/>
        </authorList>
    </citation>
    <scope>NUCLEOTIDE SEQUENCE [LARGE SCALE GENOMIC DNA]</scope>
</reference>
<proteinExistence type="inferred from homology"/>
<organismHost>
    <name type="scientific">Equus caballus</name>
    <name type="common">Horse</name>
    <dbReference type="NCBI Taxonomy" id="9796"/>
</organismHost>
<organism>
    <name type="scientific">Equine herpesvirus 1 (strain V592)</name>
    <name type="common">EHV-1</name>
    <name type="synonym">Equine abortion virus</name>
    <dbReference type="NCBI Taxonomy" id="310273"/>
    <lineage>
        <taxon>Viruses</taxon>
        <taxon>Duplodnaviria</taxon>
        <taxon>Heunggongvirae</taxon>
        <taxon>Peploviricota</taxon>
        <taxon>Herviviricetes</taxon>
        <taxon>Herpesvirales</taxon>
        <taxon>Orthoherpesviridae</taxon>
        <taxon>Alphaherpesvirinae</taxon>
        <taxon>Varicellovirus</taxon>
        <taxon>Varicellovirus equidalpha1</taxon>
        <taxon>Equid alphaherpesvirus 1</taxon>
    </lineage>
</organism>
<sequence>MASQRSDFAPDLYDFIESNDFGEDPLIRAASAAEEGFTQPAAPDLLYGSQNMFGVDDAPLSTPAVVIPPPSPAPEPRGGKAKRSPSAAGSGGPPTPAAAAQPASPAPSPAPGLAAMLKMVHSSVAPGNGRRATGSSSPGGGDAADPVALDSDTETCPGSPQPEFPSSASPGGGSPAPRVRSISISSSSSSSSSMDEDDQADGAGASSSSSSSSDDSDSDEGGEEETPRPRHSQNAAKTPSAAGSPGPSSGGDRPAAGAATPKSCRSGAASPGAPAPAPASAPAPSRPGGGLLPPGARILEYLEGVREANLAKTLERPEPPAGMASPPGRSPHRLPKDQRPKSALAGASKRKRANPRPIPQTQTQAPAEEAPQTAVWDLLDMNSSQATGAAAAAASAPAAASCAPGVYQREPLLTPSGDPWPGSDPPPMGRVRYGGTGDSRDGLWDDPEIVLAASRYAEAQAPVPVFVPEMGDSTKQYNALVRMVFESREAMSWLQNSKLSGQDQNLAQFCQKFIHAPRGHGSFITGSVANPLPHIGDAMAAGNALWALPHAAASVAMSRRYDRTQKSFILQSLRRAYADMAYPRDEAGRPDSLAAVAGYPAQAAAAAASQQQPEAPAPSVRVREAYTRVCAALGPRRKAAAAAAAPGSRAPRPSAFRLRELGDACVLACQAVFEALLRLRGGASAVPGLDPSEIPSPACPPEALCSNPAGLETAALSLYELRDLVERARLLGDSDPTHRLGSDELRLAVRAVLVVARTVAPLVRYNAEGARARASAWTVTQAVFSIPSLVGGMLGEAVSLLAPPTRSQQPSSSSPGGEPFSGSAAAEGSLQTLPPLWPTVPGKQSATVPSSHSQSPQHSQSGGGAGATTATCCRATQTNARSRGQQHQPQKARSPQAAASPAHLSQEAMPGSSSDDRAIHGRPRGKSGKRRSEPLEPAAQAGASASFSSSARGYDPSGPVDSPPAPKRRVATPGHQAPRALGPMPAEGPDRRGGFRRVPRGDCHTPRPSDAACAAYCPPELVAELIDNQLFPEAWRPALTFDPQALATIAARCSGPPARDGARFGELAASGPLRRRAAWMHQIPDPEDVKVVVLYSPLQDEDLLGGLPASRPGGSRREPLWSDLKGGLSALLAALGNRILTKRSHAWAGNWTGAPDVSALNAQGVLLLSTGDLAFTGCVEYLCLRLGSARRKLLVLDAVSTEDWPQDGPAISQYHIYMRAALTPRVACAVRWPRERHLSRAVLTSSTLFGPGLFARAEAAFARLYPDSAPLRLCRSSNVAYTVDTRAGERTRVPLAPREYRQRVLPDYDGCKDMRAQAEGLGFHDPDFEEGAAQSHRAANRWGLGAWLRPVYLACGRRGAGAVEPSELLIPELLSEFCRVALLEPDAEAEPLVLPITEAPRRRAPRVDWEPGFGSRSTSVLHMGATELCLPEPDDELEIDGAGDVELVVEHPGPSPGVAQALRRAPIKIEVVSDDEDGGDWCNPYLS</sequence>